<sequence length="167" mass="18695">MSTAKLVKSKATNLLYTRNDVSDSEKKATVELLNRQVIQFIDLSLITKQAHWNMRGANFIAVHEMLDGFRTALIDHLDTMAERAVQLGGVALGTTQVINSKTPLKSYPLDIHNVQDHLKELADRYAIVANDVRKAIGEAKDDDTADILTAASRDLDKFLWFIESNIE</sequence>
<dbReference type="EC" id="1.16.-.-" evidence="1"/>
<dbReference type="EMBL" id="CU928158">
    <property type="protein sequence ID" value="CAQ88489.1"/>
    <property type="molecule type" value="Genomic_DNA"/>
</dbReference>
<dbReference type="RefSeq" id="WP_000100800.1">
    <property type="nucleotide sequence ID" value="NC_011740.1"/>
</dbReference>
<dbReference type="SMR" id="B7LMB6"/>
<dbReference type="GeneID" id="93776616"/>
<dbReference type="KEGG" id="efe:EFER_0954"/>
<dbReference type="HOGENOM" id="CLU_098183_1_2_6"/>
<dbReference type="OrthoDB" id="9797687at2"/>
<dbReference type="Proteomes" id="UP000000745">
    <property type="component" value="Chromosome"/>
</dbReference>
<dbReference type="GO" id="GO:0005737">
    <property type="term" value="C:cytoplasm"/>
    <property type="evidence" value="ECO:0007669"/>
    <property type="project" value="UniProtKB-UniRule"/>
</dbReference>
<dbReference type="GO" id="GO:0009295">
    <property type="term" value="C:nucleoid"/>
    <property type="evidence" value="ECO:0007669"/>
    <property type="project" value="UniProtKB-SubCell"/>
</dbReference>
<dbReference type="GO" id="GO:0003677">
    <property type="term" value="F:DNA binding"/>
    <property type="evidence" value="ECO:0007669"/>
    <property type="project" value="UniProtKB-UniRule"/>
</dbReference>
<dbReference type="GO" id="GO:0008199">
    <property type="term" value="F:ferric iron binding"/>
    <property type="evidence" value="ECO:0007669"/>
    <property type="project" value="UniProtKB-UniRule"/>
</dbReference>
<dbReference type="GO" id="GO:0016722">
    <property type="term" value="F:oxidoreductase activity, acting on metal ions"/>
    <property type="evidence" value="ECO:0007669"/>
    <property type="project" value="InterPro"/>
</dbReference>
<dbReference type="GO" id="GO:0030261">
    <property type="term" value="P:chromosome condensation"/>
    <property type="evidence" value="ECO:0007669"/>
    <property type="project" value="UniProtKB-KW"/>
</dbReference>
<dbReference type="GO" id="GO:0006879">
    <property type="term" value="P:intracellular iron ion homeostasis"/>
    <property type="evidence" value="ECO:0007669"/>
    <property type="project" value="UniProtKB-KW"/>
</dbReference>
<dbReference type="CDD" id="cd01043">
    <property type="entry name" value="DPS"/>
    <property type="match status" value="1"/>
</dbReference>
<dbReference type="FunFam" id="1.20.1260.10:FF:000003">
    <property type="entry name" value="DNA protection during starvation protein"/>
    <property type="match status" value="1"/>
</dbReference>
<dbReference type="Gene3D" id="1.20.1260.10">
    <property type="match status" value="1"/>
</dbReference>
<dbReference type="HAMAP" id="MF_01441">
    <property type="entry name" value="Dps"/>
    <property type="match status" value="1"/>
</dbReference>
<dbReference type="InterPro" id="IPR002177">
    <property type="entry name" value="DPS_DNA-bd"/>
</dbReference>
<dbReference type="InterPro" id="IPR023188">
    <property type="entry name" value="DPS_DNA-bd_CS"/>
</dbReference>
<dbReference type="InterPro" id="IPR023067">
    <property type="entry name" value="Dps_gammaproteobac"/>
</dbReference>
<dbReference type="InterPro" id="IPR012347">
    <property type="entry name" value="Ferritin-like"/>
</dbReference>
<dbReference type="InterPro" id="IPR009078">
    <property type="entry name" value="Ferritin-like_SF"/>
</dbReference>
<dbReference type="InterPro" id="IPR008331">
    <property type="entry name" value="Ferritin_DPS_dom"/>
</dbReference>
<dbReference type="NCBIfam" id="NF006975">
    <property type="entry name" value="PRK09448.1"/>
    <property type="match status" value="1"/>
</dbReference>
<dbReference type="PANTHER" id="PTHR42932:SF3">
    <property type="entry name" value="DNA PROTECTION DURING STARVATION PROTEIN"/>
    <property type="match status" value="1"/>
</dbReference>
<dbReference type="PANTHER" id="PTHR42932">
    <property type="entry name" value="GENERAL STRESS PROTEIN 20U"/>
    <property type="match status" value="1"/>
</dbReference>
<dbReference type="Pfam" id="PF00210">
    <property type="entry name" value="Ferritin"/>
    <property type="match status" value="1"/>
</dbReference>
<dbReference type="PIRSF" id="PIRSF005900">
    <property type="entry name" value="Dps"/>
    <property type="match status" value="1"/>
</dbReference>
<dbReference type="PRINTS" id="PR01346">
    <property type="entry name" value="HELNAPAPROT"/>
</dbReference>
<dbReference type="SUPFAM" id="SSF47240">
    <property type="entry name" value="Ferritin-like"/>
    <property type="match status" value="1"/>
</dbReference>
<dbReference type="PROSITE" id="PS00818">
    <property type="entry name" value="DPS_1"/>
    <property type="match status" value="1"/>
</dbReference>
<dbReference type="PROSITE" id="PS00819">
    <property type="entry name" value="DPS_2"/>
    <property type="match status" value="1"/>
</dbReference>
<keyword id="KW-0963">Cytoplasm</keyword>
<keyword id="KW-0226">DNA condensation</keyword>
<keyword id="KW-0238">DNA-binding</keyword>
<keyword id="KW-0408">Iron</keyword>
<keyword id="KW-0409">Iron storage</keyword>
<keyword id="KW-0479">Metal-binding</keyword>
<keyword id="KW-0560">Oxidoreductase</keyword>
<feature type="chain" id="PRO_1000145907" description="DNA protection during starvation protein">
    <location>
        <begin position="1"/>
        <end position="167"/>
    </location>
</feature>
<feature type="binding site" evidence="1">
    <location>
        <position position="51"/>
    </location>
    <ligand>
        <name>Fe cation</name>
        <dbReference type="ChEBI" id="CHEBI:24875"/>
        <label>1</label>
        <note>ligand shared between two neighboring subunits</note>
    </ligand>
</feature>
<feature type="binding site" description="in other chain" evidence="1">
    <location>
        <position position="78"/>
    </location>
    <ligand>
        <name>Fe cation</name>
        <dbReference type="ChEBI" id="CHEBI:24875"/>
        <label>1</label>
        <note>ligand shared between two neighboring subunits</note>
    </ligand>
</feature>
<feature type="binding site" description="in other chain" evidence="1">
    <location>
        <position position="82"/>
    </location>
    <ligand>
        <name>Fe cation</name>
        <dbReference type="ChEBI" id="CHEBI:24875"/>
        <label>1</label>
        <note>ligand shared between two neighboring subunits</note>
    </ligand>
</feature>
<feature type="binding site" evidence="1">
    <location>
        <position position="82"/>
    </location>
    <ligand>
        <name>Fe cation</name>
        <dbReference type="ChEBI" id="CHEBI:24875"/>
        <label>2</label>
    </ligand>
</feature>
<comment type="function">
    <text evidence="1">During stationary phase, binds the chromosome non-specifically, forming a highly ordered and stable dps-DNA co-crystal within which chromosomal DNA is condensed and protected from diverse damages. It protects DNA from oxidative damage by sequestering intracellular Fe(2+) ion and storing it in the form of Fe(3+) oxyhydroxide mineral, which can be released after reduction. One hydrogen peroxide oxidizes two Fe(2+) ions, which prevents hydroxyl radical production by the Fenton reaction. Dps also protects the cell from UV and gamma irradiation, iron and copper toxicity, thermal stress and acid and base shocks. Also shows a weak catalase activity.</text>
</comment>
<comment type="catalytic activity">
    <reaction evidence="1">
        <text>2 Fe(2+) + H2O2 + 2 H(+) = 2 Fe(3+) + 2 H2O</text>
        <dbReference type="Rhea" id="RHEA:48712"/>
        <dbReference type="ChEBI" id="CHEBI:15377"/>
        <dbReference type="ChEBI" id="CHEBI:15378"/>
        <dbReference type="ChEBI" id="CHEBI:16240"/>
        <dbReference type="ChEBI" id="CHEBI:29033"/>
        <dbReference type="ChEBI" id="CHEBI:29034"/>
    </reaction>
</comment>
<comment type="subunit">
    <text evidence="1">Homododecamer. The 12 subunits form a hollow sphere into which the mineral iron core of up to 500 Fe(3+) can be deposited.</text>
</comment>
<comment type="subcellular location">
    <subcellularLocation>
        <location evidence="1">Cytoplasm</location>
        <location evidence="1">Nucleoid</location>
    </subcellularLocation>
</comment>
<comment type="similarity">
    <text evidence="1">Belongs to the Dps family.</text>
</comment>
<evidence type="ECO:0000255" key="1">
    <source>
        <dbReference type="HAMAP-Rule" id="MF_01441"/>
    </source>
</evidence>
<accession>B7LMB6</accession>
<organism>
    <name type="scientific">Escherichia fergusonii (strain ATCC 35469 / DSM 13698 / CCUG 18766 / IAM 14443 / JCM 21226 / LMG 7866 / NBRC 102419 / NCTC 12128 / CDC 0568-73)</name>
    <dbReference type="NCBI Taxonomy" id="585054"/>
    <lineage>
        <taxon>Bacteria</taxon>
        <taxon>Pseudomonadati</taxon>
        <taxon>Pseudomonadota</taxon>
        <taxon>Gammaproteobacteria</taxon>
        <taxon>Enterobacterales</taxon>
        <taxon>Enterobacteriaceae</taxon>
        <taxon>Escherichia</taxon>
    </lineage>
</organism>
<reference key="1">
    <citation type="journal article" date="2009" name="PLoS Genet.">
        <title>Organised genome dynamics in the Escherichia coli species results in highly diverse adaptive paths.</title>
        <authorList>
            <person name="Touchon M."/>
            <person name="Hoede C."/>
            <person name="Tenaillon O."/>
            <person name="Barbe V."/>
            <person name="Baeriswyl S."/>
            <person name="Bidet P."/>
            <person name="Bingen E."/>
            <person name="Bonacorsi S."/>
            <person name="Bouchier C."/>
            <person name="Bouvet O."/>
            <person name="Calteau A."/>
            <person name="Chiapello H."/>
            <person name="Clermont O."/>
            <person name="Cruveiller S."/>
            <person name="Danchin A."/>
            <person name="Diard M."/>
            <person name="Dossat C."/>
            <person name="Karoui M.E."/>
            <person name="Frapy E."/>
            <person name="Garry L."/>
            <person name="Ghigo J.M."/>
            <person name="Gilles A.M."/>
            <person name="Johnson J."/>
            <person name="Le Bouguenec C."/>
            <person name="Lescat M."/>
            <person name="Mangenot S."/>
            <person name="Martinez-Jehanne V."/>
            <person name="Matic I."/>
            <person name="Nassif X."/>
            <person name="Oztas S."/>
            <person name="Petit M.A."/>
            <person name="Pichon C."/>
            <person name="Rouy Z."/>
            <person name="Ruf C.S."/>
            <person name="Schneider D."/>
            <person name="Tourret J."/>
            <person name="Vacherie B."/>
            <person name="Vallenet D."/>
            <person name="Medigue C."/>
            <person name="Rocha E.P.C."/>
            <person name="Denamur E."/>
        </authorList>
    </citation>
    <scope>NUCLEOTIDE SEQUENCE [LARGE SCALE GENOMIC DNA]</scope>
    <source>
        <strain>ATCC 35469 / DSM 13698 / BCRC 15582 / CCUG 18766 / IAM 14443 / JCM 21226 / LMG 7866 / NBRC 102419 / NCTC 12128 / CDC 0568-73</strain>
    </source>
</reference>
<gene>
    <name evidence="1" type="primary">dps</name>
    <name type="ordered locus">EFER_0954</name>
</gene>
<protein>
    <recommendedName>
        <fullName evidence="1">DNA protection during starvation protein</fullName>
        <ecNumber evidence="1">1.16.-.-</ecNumber>
    </recommendedName>
</protein>
<proteinExistence type="inferred from homology"/>
<name>DPS_ESCF3</name>